<protein>
    <recommendedName>
        <fullName evidence="1">SsrA-binding protein</fullName>
    </recommendedName>
    <alternativeName>
        <fullName evidence="1">Small protein B</fullName>
    </alternativeName>
</protein>
<organism>
    <name type="scientific">Brucella abortus (strain S19)</name>
    <dbReference type="NCBI Taxonomy" id="430066"/>
    <lineage>
        <taxon>Bacteria</taxon>
        <taxon>Pseudomonadati</taxon>
        <taxon>Pseudomonadota</taxon>
        <taxon>Alphaproteobacteria</taxon>
        <taxon>Hyphomicrobiales</taxon>
        <taxon>Brucellaceae</taxon>
        <taxon>Brucella/Ochrobactrum group</taxon>
        <taxon>Brucella</taxon>
    </lineage>
</organism>
<feature type="chain" id="PRO_1000090138" description="SsrA-binding protein">
    <location>
        <begin position="1"/>
        <end position="158"/>
    </location>
</feature>
<feature type="region of interest" description="Disordered" evidence="2">
    <location>
        <begin position="131"/>
        <end position="158"/>
    </location>
</feature>
<feature type="compositionally biased region" description="Basic and acidic residues" evidence="2">
    <location>
        <begin position="136"/>
        <end position="158"/>
    </location>
</feature>
<accession>B2SAC5</accession>
<proteinExistence type="inferred from homology"/>
<sequence>MNKPKNSPARKMIAENRKARFNFEILDTLEAGLVLTGTEVKSLRANQANIAESYASFEDGEFWLINSYIPEYTQGNRFNHEPRRLRKLLVSRREMSRLFNSVSREGMTVVPLKLYFNDRGRAKLELALARGKKTHDKRETEKKRDWNREKARLLRDRG</sequence>
<comment type="function">
    <text evidence="1">Required for rescue of stalled ribosomes mediated by trans-translation. Binds to transfer-messenger RNA (tmRNA), required for stable association of tmRNA with ribosomes. tmRNA and SmpB together mimic tRNA shape, replacing the anticodon stem-loop with SmpB. tmRNA is encoded by the ssrA gene; the 2 termini fold to resemble tRNA(Ala) and it encodes a 'tag peptide', a short internal open reading frame. During trans-translation Ala-aminoacylated tmRNA acts like a tRNA, entering the A-site of stalled ribosomes, displacing the stalled mRNA. The ribosome then switches to translate the ORF on the tmRNA; the nascent peptide is terminated with the 'tag peptide' encoded by the tmRNA and targeted for degradation. The ribosome is freed to recommence translation, which seems to be the essential function of trans-translation.</text>
</comment>
<comment type="subcellular location">
    <subcellularLocation>
        <location evidence="1">Cytoplasm</location>
    </subcellularLocation>
    <text evidence="1">The tmRNA-SmpB complex associates with stalled 70S ribosomes.</text>
</comment>
<comment type="similarity">
    <text evidence="1">Belongs to the SmpB family.</text>
</comment>
<evidence type="ECO:0000255" key="1">
    <source>
        <dbReference type="HAMAP-Rule" id="MF_00023"/>
    </source>
</evidence>
<evidence type="ECO:0000256" key="2">
    <source>
        <dbReference type="SAM" id="MobiDB-lite"/>
    </source>
</evidence>
<reference key="1">
    <citation type="journal article" date="2008" name="PLoS ONE">
        <title>Genome sequence of Brucella abortus vaccine strain S19 compared to virulent strains yields candidate virulence genes.</title>
        <authorList>
            <person name="Crasta O.R."/>
            <person name="Folkerts O."/>
            <person name="Fei Z."/>
            <person name="Mane S.P."/>
            <person name="Evans C."/>
            <person name="Martino-Catt S."/>
            <person name="Bricker B."/>
            <person name="Yu G."/>
            <person name="Du L."/>
            <person name="Sobral B.W."/>
        </authorList>
    </citation>
    <scope>NUCLEOTIDE SEQUENCE [LARGE SCALE GENOMIC DNA]</scope>
    <source>
        <strain>S19</strain>
    </source>
</reference>
<gene>
    <name evidence="1" type="primary">smpB</name>
    <name type="ordered locus">BAbS19_I06240</name>
</gene>
<keyword id="KW-0963">Cytoplasm</keyword>
<keyword id="KW-0694">RNA-binding</keyword>
<dbReference type="EMBL" id="CP000887">
    <property type="protein sequence ID" value="ACD72155.1"/>
    <property type="molecule type" value="Genomic_DNA"/>
</dbReference>
<dbReference type="RefSeq" id="WP_002963791.1">
    <property type="nucleotide sequence ID" value="NC_010742.1"/>
</dbReference>
<dbReference type="SMR" id="B2SAC5"/>
<dbReference type="GeneID" id="97534023"/>
<dbReference type="KEGG" id="bmc:BAbS19_I06240"/>
<dbReference type="HOGENOM" id="CLU_108953_0_1_5"/>
<dbReference type="Proteomes" id="UP000002565">
    <property type="component" value="Chromosome 1"/>
</dbReference>
<dbReference type="GO" id="GO:0005829">
    <property type="term" value="C:cytosol"/>
    <property type="evidence" value="ECO:0007669"/>
    <property type="project" value="TreeGrafter"/>
</dbReference>
<dbReference type="GO" id="GO:0003723">
    <property type="term" value="F:RNA binding"/>
    <property type="evidence" value="ECO:0007669"/>
    <property type="project" value="UniProtKB-UniRule"/>
</dbReference>
<dbReference type="GO" id="GO:0070929">
    <property type="term" value="P:trans-translation"/>
    <property type="evidence" value="ECO:0007669"/>
    <property type="project" value="UniProtKB-UniRule"/>
</dbReference>
<dbReference type="CDD" id="cd09294">
    <property type="entry name" value="SmpB"/>
    <property type="match status" value="1"/>
</dbReference>
<dbReference type="Gene3D" id="2.40.280.10">
    <property type="match status" value="1"/>
</dbReference>
<dbReference type="HAMAP" id="MF_00023">
    <property type="entry name" value="SmpB"/>
    <property type="match status" value="1"/>
</dbReference>
<dbReference type="InterPro" id="IPR023620">
    <property type="entry name" value="SmpB"/>
</dbReference>
<dbReference type="InterPro" id="IPR000037">
    <property type="entry name" value="SsrA-bd_prot"/>
</dbReference>
<dbReference type="InterPro" id="IPR020081">
    <property type="entry name" value="SsrA-bd_prot_CS"/>
</dbReference>
<dbReference type="NCBIfam" id="NF003843">
    <property type="entry name" value="PRK05422.1"/>
    <property type="match status" value="1"/>
</dbReference>
<dbReference type="NCBIfam" id="TIGR00086">
    <property type="entry name" value="smpB"/>
    <property type="match status" value="1"/>
</dbReference>
<dbReference type="PANTHER" id="PTHR30308:SF2">
    <property type="entry name" value="SSRA-BINDING PROTEIN"/>
    <property type="match status" value="1"/>
</dbReference>
<dbReference type="PANTHER" id="PTHR30308">
    <property type="entry name" value="TMRNA-BINDING COMPONENT OF TRANS-TRANSLATION TAGGING COMPLEX"/>
    <property type="match status" value="1"/>
</dbReference>
<dbReference type="Pfam" id="PF01668">
    <property type="entry name" value="SmpB"/>
    <property type="match status" value="1"/>
</dbReference>
<dbReference type="SUPFAM" id="SSF74982">
    <property type="entry name" value="Small protein B (SmpB)"/>
    <property type="match status" value="1"/>
</dbReference>
<dbReference type="PROSITE" id="PS01317">
    <property type="entry name" value="SSRP"/>
    <property type="match status" value="1"/>
</dbReference>
<name>SSRP_BRUA1</name>